<evidence type="ECO:0000255" key="1"/>
<evidence type="ECO:0000305" key="2"/>
<reference key="1">
    <citation type="journal article" date="1995" name="Science">
        <title>The minimal gene complement of Mycoplasma genitalium.</title>
        <authorList>
            <person name="Fraser C.M."/>
            <person name="Gocayne J.D."/>
            <person name="White O."/>
            <person name="Adams M.D."/>
            <person name="Clayton R.A."/>
            <person name="Fleischmann R.D."/>
            <person name="Bult C.J."/>
            <person name="Kerlavage A.R."/>
            <person name="Sutton G.G."/>
            <person name="Kelley J.M."/>
            <person name="Fritchman J.L."/>
            <person name="Weidman J.F."/>
            <person name="Small K.V."/>
            <person name="Sandusky M."/>
            <person name="Fuhrmann J.L."/>
            <person name="Nguyen D.T."/>
            <person name="Utterback T.R."/>
            <person name="Saudek D.M."/>
            <person name="Phillips C.A."/>
            <person name="Merrick J.M."/>
            <person name="Tomb J.-F."/>
            <person name="Dougherty B.A."/>
            <person name="Bott K.F."/>
            <person name="Hu P.-C."/>
            <person name="Lucier T.S."/>
            <person name="Peterson S.N."/>
            <person name="Smith H.O."/>
            <person name="Hutchison C.A. III"/>
            <person name="Venter J.C."/>
        </authorList>
    </citation>
    <scope>NUCLEOTIDE SEQUENCE [LARGE SCALE GENOMIC DNA]</scope>
    <source>
        <strain>ATCC 33530 / DSM 19775 / NCTC 10195 / G37</strain>
    </source>
</reference>
<reference key="2">
    <citation type="journal article" date="1993" name="J. Bacteriol.">
        <title>A survey of the Mycoplasma genitalium genome by using random sequencing.</title>
        <authorList>
            <person name="Peterson S.N."/>
            <person name="Hu P.-C."/>
            <person name="Bott K.F."/>
            <person name="Hutchison C.A. III"/>
        </authorList>
    </citation>
    <scope>NUCLEOTIDE SEQUENCE [GENOMIC DNA] OF 182-295</scope>
    <source>
        <strain>ATCC 33530 / DSM 19775 / NCTC 10195 / G37</strain>
    </source>
</reference>
<dbReference type="EMBL" id="L43967">
    <property type="protein sequence ID" value="AAC71463.1"/>
    <property type="molecule type" value="Genomic_DNA"/>
</dbReference>
<dbReference type="EMBL" id="U02194">
    <property type="protein sequence ID" value="AAD12480.1"/>
    <property type="molecule type" value="Genomic_DNA"/>
</dbReference>
<dbReference type="PIR" id="G64226">
    <property type="entry name" value="G64226"/>
</dbReference>
<dbReference type="RefSeq" id="WP_010869389.1">
    <property type="nucleotide sequence ID" value="NC_000908.2"/>
</dbReference>
<dbReference type="STRING" id="243273.MG_242"/>
<dbReference type="GeneID" id="88282388"/>
<dbReference type="KEGG" id="mge:MG_242"/>
<dbReference type="eggNOG" id="ENOG5031Y7H">
    <property type="taxonomic scope" value="Bacteria"/>
</dbReference>
<dbReference type="HOGENOM" id="CLU_416089_0_0_14"/>
<dbReference type="InParanoid" id="P47484"/>
<dbReference type="OrthoDB" id="394382at2"/>
<dbReference type="BioCyc" id="MGEN243273:G1GJ2-289-MONOMER"/>
<dbReference type="Proteomes" id="UP000000807">
    <property type="component" value="Chromosome"/>
</dbReference>
<dbReference type="GO" id="GO:0005886">
    <property type="term" value="C:plasma membrane"/>
    <property type="evidence" value="ECO:0007669"/>
    <property type="project" value="UniProtKB-SubCell"/>
</dbReference>
<dbReference type="NCBIfam" id="NF045750">
    <property type="entry name" value="MPN338"/>
    <property type="match status" value="1"/>
</dbReference>
<accession>P47484</accession>
<gene>
    <name type="ordered locus">MG242</name>
</gene>
<sequence length="630" mass="74235">MKFNKLNLSHCISFYISEVSEVFFESINQHPSRDFVNNILQKIKTTLSEEELEKLNSIEEVTKDEKIVIMLNHVLKKIVSKTGSSKCDLFNVIKQDRFNSPVYIQSINAFENNLINNEFAERRYDYLIEVNKNSYLKKFVNSIRISFFLDLRAQILSGSFTLNLVNKSIEKQKKTEIFKDIFVNALVKHFICNQLYPISLNSFIFDSENPSNKLALKERIKLLKTNWNSLFFDKFYNCLNNKNKQQLQETSDEMFYAVINTYLIMLISVEELRVYFTSKEPALILKVLDKKNTLREDPDQNPETDLYELIQFIEQNYLKKDKKTSWNKKKVQDLEQLLEEINKINLETKNESLAYPDEITELEIDNDNFVSTKQVFRNQLELQLLHGIVINPEKYGIGMWSSYFADWSEYKNLIEQMLNPKSGNDFYQFEKDIDESICQINKKYLTFISSDSNTFLIVKNDDVKVISNYVWAQLFFETRRWIINDIEFDLYEKGFDKSHFSRNIALLESLSFSWLDPFYGLTSIKEIMQKIDSKSNLKTSIEEMVNRFKHEQRINKKDNERVLMIFAYIAAFVVGFINFFSMVFTILTVSDLNAGLTVPNIIVISIASVLAFILIVIAVLFRFKWKHIKH</sequence>
<protein>
    <recommendedName>
        <fullName>Uncharacterized protein MG242</fullName>
    </recommendedName>
</protein>
<comment type="subcellular location">
    <subcellularLocation>
        <location evidence="2">Cell membrane</location>
        <topology evidence="2">Multi-pass membrane protein</topology>
    </subcellularLocation>
</comment>
<keyword id="KW-1003">Cell membrane</keyword>
<keyword id="KW-0472">Membrane</keyword>
<keyword id="KW-1185">Reference proteome</keyword>
<keyword id="KW-0812">Transmembrane</keyword>
<keyword id="KW-1133">Transmembrane helix</keyword>
<proteinExistence type="predicted"/>
<feature type="chain" id="PRO_0000210481" description="Uncharacterized protein MG242">
    <location>
        <begin position="1"/>
        <end position="630"/>
    </location>
</feature>
<feature type="transmembrane region" description="Helical" evidence="1">
    <location>
        <begin position="254"/>
        <end position="274"/>
    </location>
</feature>
<feature type="transmembrane region" description="Helical" evidence="1">
    <location>
        <begin position="504"/>
        <end position="524"/>
    </location>
</feature>
<feature type="transmembrane region" description="Helical" evidence="1">
    <location>
        <begin position="564"/>
        <end position="584"/>
    </location>
</feature>
<feature type="transmembrane region" description="Helical" evidence="1">
    <location>
        <begin position="601"/>
        <end position="621"/>
    </location>
</feature>
<organism>
    <name type="scientific">Mycoplasma genitalium (strain ATCC 33530 / DSM 19775 / NCTC 10195 / G37)</name>
    <name type="common">Mycoplasmoides genitalium</name>
    <dbReference type="NCBI Taxonomy" id="243273"/>
    <lineage>
        <taxon>Bacteria</taxon>
        <taxon>Bacillati</taxon>
        <taxon>Mycoplasmatota</taxon>
        <taxon>Mycoplasmoidales</taxon>
        <taxon>Mycoplasmoidaceae</taxon>
        <taxon>Mycoplasmoides</taxon>
    </lineage>
</organism>
<name>Y242_MYCGE</name>